<protein>
    <recommendedName>
        <fullName evidence="1">Large ribosomal subunit protein eL39y</fullName>
    </recommendedName>
    <alternativeName>
        <fullName>60S ribosomal protein L39-2</fullName>
    </alternativeName>
</protein>
<keyword id="KW-1185">Reference proteome</keyword>
<keyword id="KW-0687">Ribonucleoprotein</keyword>
<keyword id="KW-0689">Ribosomal protein</keyword>
<sequence>MPSHKTFRIKKKLAKKMRQNRPIPYWIRMRTDNTIRYNAKRRHWRRTKLGF</sequence>
<reference key="1">
    <citation type="journal article" date="2005" name="Nature">
        <title>The map-based sequence of the rice genome.</title>
        <authorList>
            <consortium name="International rice genome sequencing project (IRGSP)"/>
        </authorList>
    </citation>
    <scope>NUCLEOTIDE SEQUENCE [LARGE SCALE GENOMIC DNA]</scope>
    <source>
        <strain>cv. Nipponbare</strain>
    </source>
</reference>
<reference key="2">
    <citation type="journal article" date="2008" name="Nucleic Acids Res.">
        <title>The rice annotation project database (RAP-DB): 2008 update.</title>
        <authorList>
            <consortium name="The rice annotation project (RAP)"/>
        </authorList>
    </citation>
    <scope>GENOME REANNOTATION</scope>
    <source>
        <strain>cv. Nipponbare</strain>
    </source>
</reference>
<reference key="3">
    <citation type="journal article" date="2013" name="Rice">
        <title>Improvement of the Oryza sativa Nipponbare reference genome using next generation sequence and optical map data.</title>
        <authorList>
            <person name="Kawahara Y."/>
            <person name="de la Bastide M."/>
            <person name="Hamilton J.P."/>
            <person name="Kanamori H."/>
            <person name="McCombie W.R."/>
            <person name="Ouyang S."/>
            <person name="Schwartz D.C."/>
            <person name="Tanaka T."/>
            <person name="Wu J."/>
            <person name="Zhou S."/>
            <person name="Childs K.L."/>
            <person name="Davidson R.M."/>
            <person name="Lin H."/>
            <person name="Quesada-Ocampo L."/>
            <person name="Vaillancourt B."/>
            <person name="Sakai H."/>
            <person name="Lee S.S."/>
            <person name="Kim J."/>
            <person name="Numa H."/>
            <person name="Itoh T."/>
            <person name="Buell C.R."/>
            <person name="Matsumoto T."/>
        </authorList>
    </citation>
    <scope>GENOME REANNOTATION</scope>
    <source>
        <strain>cv. Nipponbare</strain>
    </source>
</reference>
<reference key="4">
    <citation type="journal article" date="2005" name="PLoS Biol.">
        <title>The genomes of Oryza sativa: a history of duplications.</title>
        <authorList>
            <person name="Yu J."/>
            <person name="Wang J."/>
            <person name="Lin W."/>
            <person name="Li S."/>
            <person name="Li H."/>
            <person name="Zhou J."/>
            <person name="Ni P."/>
            <person name="Dong W."/>
            <person name="Hu S."/>
            <person name="Zeng C."/>
            <person name="Zhang J."/>
            <person name="Zhang Y."/>
            <person name="Li R."/>
            <person name="Xu Z."/>
            <person name="Li S."/>
            <person name="Li X."/>
            <person name="Zheng H."/>
            <person name="Cong L."/>
            <person name="Lin L."/>
            <person name="Yin J."/>
            <person name="Geng J."/>
            <person name="Li G."/>
            <person name="Shi J."/>
            <person name="Liu J."/>
            <person name="Lv H."/>
            <person name="Li J."/>
            <person name="Wang J."/>
            <person name="Deng Y."/>
            <person name="Ran L."/>
            <person name="Shi X."/>
            <person name="Wang X."/>
            <person name="Wu Q."/>
            <person name="Li C."/>
            <person name="Ren X."/>
            <person name="Wang J."/>
            <person name="Wang X."/>
            <person name="Li D."/>
            <person name="Liu D."/>
            <person name="Zhang X."/>
            <person name="Ji Z."/>
            <person name="Zhao W."/>
            <person name="Sun Y."/>
            <person name="Zhang Z."/>
            <person name="Bao J."/>
            <person name="Han Y."/>
            <person name="Dong L."/>
            <person name="Ji J."/>
            <person name="Chen P."/>
            <person name="Wu S."/>
            <person name="Liu J."/>
            <person name="Xiao Y."/>
            <person name="Bu D."/>
            <person name="Tan J."/>
            <person name="Yang L."/>
            <person name="Ye C."/>
            <person name="Zhang J."/>
            <person name="Xu J."/>
            <person name="Zhou Y."/>
            <person name="Yu Y."/>
            <person name="Zhang B."/>
            <person name="Zhuang S."/>
            <person name="Wei H."/>
            <person name="Liu B."/>
            <person name="Lei M."/>
            <person name="Yu H."/>
            <person name="Li Y."/>
            <person name="Xu H."/>
            <person name="Wei S."/>
            <person name="He X."/>
            <person name="Fang L."/>
            <person name="Zhang Z."/>
            <person name="Zhang Y."/>
            <person name="Huang X."/>
            <person name="Su Z."/>
            <person name="Tong W."/>
            <person name="Li J."/>
            <person name="Tong Z."/>
            <person name="Li S."/>
            <person name="Ye J."/>
            <person name="Wang L."/>
            <person name="Fang L."/>
            <person name="Lei T."/>
            <person name="Chen C.-S."/>
            <person name="Chen H.-C."/>
            <person name="Xu Z."/>
            <person name="Li H."/>
            <person name="Huang H."/>
            <person name="Zhang F."/>
            <person name="Xu H."/>
            <person name="Li N."/>
            <person name="Zhao C."/>
            <person name="Li S."/>
            <person name="Dong L."/>
            <person name="Huang Y."/>
            <person name="Li L."/>
            <person name="Xi Y."/>
            <person name="Qi Q."/>
            <person name="Li W."/>
            <person name="Zhang B."/>
            <person name="Hu W."/>
            <person name="Zhang Y."/>
            <person name="Tian X."/>
            <person name="Jiao Y."/>
            <person name="Liang X."/>
            <person name="Jin J."/>
            <person name="Gao L."/>
            <person name="Zheng W."/>
            <person name="Hao B."/>
            <person name="Liu S.-M."/>
            <person name="Wang W."/>
            <person name="Yuan L."/>
            <person name="Cao M."/>
            <person name="McDermott J."/>
            <person name="Samudrala R."/>
            <person name="Wang J."/>
            <person name="Wong G.K.-S."/>
            <person name="Yang H."/>
        </authorList>
    </citation>
    <scope>NUCLEOTIDE SEQUENCE [LARGE SCALE GENOMIC DNA]</scope>
    <source>
        <strain>cv. Nipponbare</strain>
    </source>
</reference>
<proteinExistence type="inferred from homology"/>
<organism>
    <name type="scientific">Oryza sativa subsp. japonica</name>
    <name type="common">Rice</name>
    <dbReference type="NCBI Taxonomy" id="39947"/>
    <lineage>
        <taxon>Eukaryota</taxon>
        <taxon>Viridiplantae</taxon>
        <taxon>Streptophyta</taxon>
        <taxon>Embryophyta</taxon>
        <taxon>Tracheophyta</taxon>
        <taxon>Spermatophyta</taxon>
        <taxon>Magnoliopsida</taxon>
        <taxon>Liliopsida</taxon>
        <taxon>Poales</taxon>
        <taxon>Poaceae</taxon>
        <taxon>BOP clade</taxon>
        <taxon>Oryzoideae</taxon>
        <taxon>Oryzeae</taxon>
        <taxon>Oryzinae</taxon>
        <taxon>Oryza</taxon>
        <taxon>Oryza sativa</taxon>
    </lineage>
</organism>
<evidence type="ECO:0000305" key="1"/>
<evidence type="ECO:0000312" key="2">
    <source>
        <dbReference type="EMBL" id="BAD19090.1"/>
    </source>
</evidence>
<evidence type="ECO:0000312" key="3">
    <source>
        <dbReference type="EMBL" id="BAS81371.1"/>
    </source>
</evidence>
<evidence type="ECO:0000312" key="4">
    <source>
        <dbReference type="EMBL" id="EAZ24944.1"/>
    </source>
</evidence>
<accession>P51426</accession>
<accession>A0A0P0VQP9</accession>
<accession>Q0DWT0</accession>
<accession>Q6KAJ6</accession>
<gene>
    <name type="primary">RPL39B</name>
    <name evidence="3" type="ordered locus">Os02g0796900</name>
    <name evidence="1" type="ordered locus">LOC_Os02g55370</name>
    <name evidence="2" type="ORF">OJ1004_E04.30</name>
    <name evidence="4" type="ORF">OsJ_08725</name>
</gene>
<feature type="chain" id="PRO_0000127036" description="Large ribosomal subunit protein eL39y">
    <location>
        <begin position="1"/>
        <end position="51"/>
    </location>
</feature>
<comment type="similarity">
    <text evidence="1">Belongs to the eukaryotic ribosomal protein eL39 family.</text>
</comment>
<comment type="sequence caution" evidence="1">
    <conflict type="erroneous initiation">
        <sequence resource="EMBL-CDS" id="BAS81371"/>
    </conflict>
    <text>Truncated N-terminus.</text>
</comment>
<dbReference type="EMBL" id="AP003975">
    <property type="protein sequence ID" value="BAD19090.1"/>
    <property type="molecule type" value="Genomic_DNA"/>
</dbReference>
<dbReference type="EMBL" id="AP008208">
    <property type="protein sequence ID" value="BAF10308.1"/>
    <property type="molecule type" value="Genomic_DNA"/>
</dbReference>
<dbReference type="EMBL" id="AP014958">
    <property type="protein sequence ID" value="BAS81371.1"/>
    <property type="status" value="ALT_INIT"/>
    <property type="molecule type" value="Genomic_DNA"/>
</dbReference>
<dbReference type="EMBL" id="CM000139">
    <property type="protein sequence ID" value="EAZ24944.1"/>
    <property type="molecule type" value="Genomic_DNA"/>
</dbReference>
<dbReference type="RefSeq" id="XP_015622685.1">
    <property type="nucleotide sequence ID" value="XM_015767199.1"/>
</dbReference>
<dbReference type="RefSeq" id="XP_015622686.1">
    <property type="nucleotide sequence ID" value="XM_015767200.1"/>
</dbReference>
<dbReference type="RefSeq" id="XP_015622687.1">
    <property type="nucleotide sequence ID" value="XM_015767201.1"/>
</dbReference>
<dbReference type="SMR" id="P51426"/>
<dbReference type="FunCoup" id="P51426">
    <property type="interactions" value="1217"/>
</dbReference>
<dbReference type="STRING" id="39947.P51426"/>
<dbReference type="PaxDb" id="39947-P51426"/>
<dbReference type="EnsemblPlants" id="Os02t0797200-01">
    <property type="protein sequence ID" value="Os02t0797200-01"/>
    <property type="gene ID" value="Os02g0797200"/>
</dbReference>
<dbReference type="Gramene" id="Os02t0797200-01">
    <property type="protein sequence ID" value="Os02t0797200-01"/>
    <property type="gene ID" value="Os02g0797200"/>
</dbReference>
<dbReference type="KEGG" id="dosa:Os02g0797200"/>
<dbReference type="HOGENOM" id="CLU_181948_1_2_1"/>
<dbReference type="InParanoid" id="P51426"/>
<dbReference type="OrthoDB" id="274627at2759"/>
<dbReference type="Proteomes" id="UP000000763">
    <property type="component" value="Chromosome 2"/>
</dbReference>
<dbReference type="Proteomes" id="UP000007752">
    <property type="component" value="Chromosome 2"/>
</dbReference>
<dbReference type="Proteomes" id="UP000059680">
    <property type="component" value="Chromosome 2"/>
</dbReference>
<dbReference type="ExpressionAtlas" id="P51426">
    <property type="expression patterns" value="baseline and differential"/>
</dbReference>
<dbReference type="GO" id="GO:0022625">
    <property type="term" value="C:cytosolic large ribosomal subunit"/>
    <property type="evidence" value="ECO:0000318"/>
    <property type="project" value="GO_Central"/>
</dbReference>
<dbReference type="GO" id="GO:0003735">
    <property type="term" value="F:structural constituent of ribosome"/>
    <property type="evidence" value="ECO:0007669"/>
    <property type="project" value="InterPro"/>
</dbReference>
<dbReference type="GO" id="GO:0006412">
    <property type="term" value="P:translation"/>
    <property type="evidence" value="ECO:0007669"/>
    <property type="project" value="InterPro"/>
</dbReference>
<dbReference type="FunFam" id="1.10.1620.10:FF:000001">
    <property type="entry name" value="60S ribosomal protein-like L39"/>
    <property type="match status" value="1"/>
</dbReference>
<dbReference type="Gene3D" id="1.10.1620.10">
    <property type="entry name" value="Ribosomal protein L39e"/>
    <property type="match status" value="1"/>
</dbReference>
<dbReference type="HAMAP" id="MF_00629">
    <property type="entry name" value="Ribosomal_eL39"/>
    <property type="match status" value="1"/>
</dbReference>
<dbReference type="InterPro" id="IPR000077">
    <property type="entry name" value="Ribosomal_eL39"/>
</dbReference>
<dbReference type="InterPro" id="IPR020083">
    <property type="entry name" value="Ribosomal_eL39_CS"/>
</dbReference>
<dbReference type="InterPro" id="IPR023626">
    <property type="entry name" value="Ribosomal_eL39_dom_sf"/>
</dbReference>
<dbReference type="PANTHER" id="PTHR19970:SF0">
    <property type="entry name" value="LARGE RIBOSOMAL SUBUNIT PROTEIN EL39"/>
    <property type="match status" value="1"/>
</dbReference>
<dbReference type="PANTHER" id="PTHR19970">
    <property type="entry name" value="RIBOSOMAL PROTEIN L39E"/>
    <property type="match status" value="1"/>
</dbReference>
<dbReference type="Pfam" id="PF00832">
    <property type="entry name" value="Ribosomal_L39"/>
    <property type="match status" value="1"/>
</dbReference>
<dbReference type="SUPFAM" id="SSF48662">
    <property type="entry name" value="Ribosomal protein L39e"/>
    <property type="match status" value="1"/>
</dbReference>
<dbReference type="PROSITE" id="PS00051">
    <property type="entry name" value="RIBOSOMAL_L39E"/>
    <property type="match status" value="1"/>
</dbReference>
<name>RL392_ORYSJ</name>